<gene>
    <name evidence="1" type="primary">rpsJ</name>
    <name type="ordered locus">FRAAL1080</name>
</gene>
<protein>
    <recommendedName>
        <fullName evidence="1">Small ribosomal subunit protein uS10</fullName>
    </recommendedName>
    <alternativeName>
        <fullName evidence="2">30S ribosomal protein S10</fullName>
    </alternativeName>
</protein>
<proteinExistence type="inferred from homology"/>
<feature type="chain" id="PRO_1000015021" description="Small ribosomal subunit protein uS10">
    <location>
        <begin position="1"/>
        <end position="102"/>
    </location>
</feature>
<reference key="1">
    <citation type="journal article" date="2007" name="Genome Res.">
        <title>Genome characteristics of facultatively symbiotic Frankia sp. strains reflect host range and host plant biogeography.</title>
        <authorList>
            <person name="Normand P."/>
            <person name="Lapierre P."/>
            <person name="Tisa L.S."/>
            <person name="Gogarten J.P."/>
            <person name="Alloisio N."/>
            <person name="Bagnarol E."/>
            <person name="Bassi C.A."/>
            <person name="Berry A.M."/>
            <person name="Bickhart D.M."/>
            <person name="Choisne N."/>
            <person name="Couloux A."/>
            <person name="Cournoyer B."/>
            <person name="Cruveiller S."/>
            <person name="Daubin V."/>
            <person name="Demange N."/>
            <person name="Francino M.P."/>
            <person name="Goltsman E."/>
            <person name="Huang Y."/>
            <person name="Kopp O.R."/>
            <person name="Labarre L."/>
            <person name="Lapidus A."/>
            <person name="Lavire C."/>
            <person name="Marechal J."/>
            <person name="Martinez M."/>
            <person name="Mastronunzio J.E."/>
            <person name="Mullin B.C."/>
            <person name="Niemann J."/>
            <person name="Pujic P."/>
            <person name="Rawnsley T."/>
            <person name="Rouy Z."/>
            <person name="Schenowitz C."/>
            <person name="Sellstedt A."/>
            <person name="Tavares F."/>
            <person name="Tomkins J.P."/>
            <person name="Vallenet D."/>
            <person name="Valverde C."/>
            <person name="Wall L.G."/>
            <person name="Wang Y."/>
            <person name="Medigue C."/>
            <person name="Benson D.R."/>
        </authorList>
    </citation>
    <scope>NUCLEOTIDE SEQUENCE [LARGE SCALE GENOMIC DNA]</scope>
    <source>
        <strain>DSM 45986 / CECT 9034 / ACN14a</strain>
    </source>
</reference>
<sequence length="102" mass="11647">MAAQKIRIRLKAYDHEVIDSSARKIVETVTRTGAQVAGPVPLPTEKNIYCVIRSPHKYKDSREHFEMRTHKRLIDILDPTPKTVDSLMRLDLPAGVDIEIKL</sequence>
<comment type="function">
    <text evidence="1">Involved in the binding of tRNA to the ribosomes.</text>
</comment>
<comment type="subunit">
    <text evidence="1">Part of the 30S ribosomal subunit.</text>
</comment>
<comment type="similarity">
    <text evidence="1">Belongs to the universal ribosomal protein uS10 family.</text>
</comment>
<keyword id="KW-1185">Reference proteome</keyword>
<keyword id="KW-0687">Ribonucleoprotein</keyword>
<keyword id="KW-0689">Ribosomal protein</keyword>
<organism>
    <name type="scientific">Frankia alni (strain DSM 45986 / CECT 9034 / ACN14a)</name>
    <dbReference type="NCBI Taxonomy" id="326424"/>
    <lineage>
        <taxon>Bacteria</taxon>
        <taxon>Bacillati</taxon>
        <taxon>Actinomycetota</taxon>
        <taxon>Actinomycetes</taxon>
        <taxon>Frankiales</taxon>
        <taxon>Frankiaceae</taxon>
        <taxon>Frankia</taxon>
    </lineage>
</organism>
<accession>Q0RRS2</accession>
<dbReference type="EMBL" id="CT573213">
    <property type="protein sequence ID" value="CAJ59745.1"/>
    <property type="molecule type" value="Genomic_DNA"/>
</dbReference>
<dbReference type="RefSeq" id="WP_007514815.1">
    <property type="nucleotide sequence ID" value="NC_008278.1"/>
</dbReference>
<dbReference type="SMR" id="Q0RRS2"/>
<dbReference type="STRING" id="326424.FRAAL1080"/>
<dbReference type="KEGG" id="fal:FRAAL1080"/>
<dbReference type="eggNOG" id="COG0051">
    <property type="taxonomic scope" value="Bacteria"/>
</dbReference>
<dbReference type="HOGENOM" id="CLU_122625_1_3_11"/>
<dbReference type="OrthoDB" id="9804464at2"/>
<dbReference type="Proteomes" id="UP000000657">
    <property type="component" value="Chromosome"/>
</dbReference>
<dbReference type="GO" id="GO:1990904">
    <property type="term" value="C:ribonucleoprotein complex"/>
    <property type="evidence" value="ECO:0007669"/>
    <property type="project" value="UniProtKB-KW"/>
</dbReference>
<dbReference type="GO" id="GO:0005840">
    <property type="term" value="C:ribosome"/>
    <property type="evidence" value="ECO:0007669"/>
    <property type="project" value="UniProtKB-KW"/>
</dbReference>
<dbReference type="GO" id="GO:0003735">
    <property type="term" value="F:structural constituent of ribosome"/>
    <property type="evidence" value="ECO:0007669"/>
    <property type="project" value="InterPro"/>
</dbReference>
<dbReference type="GO" id="GO:0000049">
    <property type="term" value="F:tRNA binding"/>
    <property type="evidence" value="ECO:0007669"/>
    <property type="project" value="UniProtKB-UniRule"/>
</dbReference>
<dbReference type="GO" id="GO:0006412">
    <property type="term" value="P:translation"/>
    <property type="evidence" value="ECO:0007669"/>
    <property type="project" value="UniProtKB-UniRule"/>
</dbReference>
<dbReference type="FunFam" id="3.30.70.600:FF:000001">
    <property type="entry name" value="30S ribosomal protein S10"/>
    <property type="match status" value="1"/>
</dbReference>
<dbReference type="Gene3D" id="3.30.70.600">
    <property type="entry name" value="Ribosomal protein S10 domain"/>
    <property type="match status" value="1"/>
</dbReference>
<dbReference type="HAMAP" id="MF_00508">
    <property type="entry name" value="Ribosomal_uS10"/>
    <property type="match status" value="1"/>
</dbReference>
<dbReference type="InterPro" id="IPR001848">
    <property type="entry name" value="Ribosomal_uS10"/>
</dbReference>
<dbReference type="InterPro" id="IPR018268">
    <property type="entry name" value="Ribosomal_uS10_CS"/>
</dbReference>
<dbReference type="InterPro" id="IPR027486">
    <property type="entry name" value="Ribosomal_uS10_dom"/>
</dbReference>
<dbReference type="InterPro" id="IPR036838">
    <property type="entry name" value="Ribosomal_uS10_dom_sf"/>
</dbReference>
<dbReference type="NCBIfam" id="NF001861">
    <property type="entry name" value="PRK00596.1"/>
    <property type="match status" value="1"/>
</dbReference>
<dbReference type="NCBIfam" id="TIGR01049">
    <property type="entry name" value="rpsJ_bact"/>
    <property type="match status" value="1"/>
</dbReference>
<dbReference type="PANTHER" id="PTHR11700">
    <property type="entry name" value="30S RIBOSOMAL PROTEIN S10 FAMILY MEMBER"/>
    <property type="match status" value="1"/>
</dbReference>
<dbReference type="Pfam" id="PF00338">
    <property type="entry name" value="Ribosomal_S10"/>
    <property type="match status" value="1"/>
</dbReference>
<dbReference type="PRINTS" id="PR00971">
    <property type="entry name" value="RIBOSOMALS10"/>
</dbReference>
<dbReference type="SMART" id="SM01403">
    <property type="entry name" value="Ribosomal_S10"/>
    <property type="match status" value="1"/>
</dbReference>
<dbReference type="SUPFAM" id="SSF54999">
    <property type="entry name" value="Ribosomal protein S10"/>
    <property type="match status" value="1"/>
</dbReference>
<dbReference type="PROSITE" id="PS00361">
    <property type="entry name" value="RIBOSOMAL_S10"/>
    <property type="match status" value="1"/>
</dbReference>
<evidence type="ECO:0000255" key="1">
    <source>
        <dbReference type="HAMAP-Rule" id="MF_00508"/>
    </source>
</evidence>
<evidence type="ECO:0000305" key="2"/>
<name>RS10_FRAAA</name>